<protein>
    <recommendedName>
        <fullName evidence="17">Synaptotagmin-2</fullName>
    </recommendedName>
    <alternativeName>
        <fullName evidence="18">Synaptotagmin II</fullName>
        <shortName evidence="3">SytII</shortName>
    </alternativeName>
</protein>
<name>SYT2_HUMAN</name>
<accession>Q8N9I0</accession>
<accession>Q496K5</accession>
<accession>Q8NBE5</accession>
<organism>
    <name type="scientific">Homo sapiens</name>
    <name type="common">Human</name>
    <dbReference type="NCBI Taxonomy" id="9606"/>
    <lineage>
        <taxon>Eukaryota</taxon>
        <taxon>Metazoa</taxon>
        <taxon>Chordata</taxon>
        <taxon>Craniata</taxon>
        <taxon>Vertebrata</taxon>
        <taxon>Euteleostomi</taxon>
        <taxon>Mammalia</taxon>
        <taxon>Eutheria</taxon>
        <taxon>Euarchontoglires</taxon>
        <taxon>Primates</taxon>
        <taxon>Haplorrhini</taxon>
        <taxon>Catarrhini</taxon>
        <taxon>Hominidae</taxon>
        <taxon>Homo</taxon>
    </lineage>
</organism>
<feature type="chain" id="PRO_0000183942" description="Synaptotagmin-2">
    <location>
        <begin position="1"/>
        <end position="419"/>
    </location>
</feature>
<feature type="topological domain" description="Vesicular" evidence="5">
    <location>
        <begin position="1"/>
        <end position="62"/>
    </location>
</feature>
<feature type="transmembrane region" description="Helical" evidence="5">
    <location>
        <begin position="63"/>
        <end position="83"/>
    </location>
</feature>
<feature type="topological domain" description="Cytoplasmic" evidence="5">
    <location>
        <begin position="84"/>
        <end position="419"/>
    </location>
</feature>
<feature type="domain" description="C2 1" evidence="6">
    <location>
        <begin position="139"/>
        <end position="258"/>
    </location>
</feature>
<feature type="domain" description="C2 2" evidence="6">
    <location>
        <begin position="270"/>
        <end position="403"/>
    </location>
</feature>
<feature type="region of interest" description="Disordered" evidence="7">
    <location>
        <begin position="16"/>
        <end position="39"/>
    </location>
</feature>
<feature type="region of interest" description="Disordered" evidence="7">
    <location>
        <begin position="99"/>
        <end position="138"/>
    </location>
</feature>
<feature type="region of interest" description="Phospholipid binding" evidence="1">
    <location>
        <begin position="133"/>
        <end position="379"/>
    </location>
</feature>
<feature type="compositionally biased region" description="Acidic residues" evidence="7">
    <location>
        <begin position="116"/>
        <end position="136"/>
    </location>
</feature>
<feature type="binding site" evidence="6">
    <location>
        <position position="169"/>
    </location>
    <ligand>
        <name>Ca(2+)</name>
        <dbReference type="ChEBI" id="CHEBI:29108"/>
        <label>2</label>
    </ligand>
</feature>
<feature type="binding site" evidence="6">
    <location>
        <position position="170"/>
    </location>
    <ligand>
        <name>Ca(2+)</name>
        <dbReference type="ChEBI" id="CHEBI:29108"/>
        <label>1</label>
    </ligand>
</feature>
<feature type="binding site" evidence="6">
    <location>
        <position position="170"/>
    </location>
    <ligand>
        <name>Ca(2+)</name>
        <dbReference type="ChEBI" id="CHEBI:29108"/>
        <label>2</label>
    </ligand>
</feature>
<feature type="binding site" evidence="6">
    <location>
        <position position="176"/>
    </location>
    <ligand>
        <name>Ca(2+)</name>
        <dbReference type="ChEBI" id="CHEBI:29108"/>
        <label>1</label>
    </ligand>
</feature>
<feature type="binding site" evidence="6">
    <location>
        <position position="228"/>
    </location>
    <ligand>
        <name>Ca(2+)</name>
        <dbReference type="ChEBI" id="CHEBI:29108"/>
        <label>1</label>
    </ligand>
</feature>
<feature type="binding site" evidence="6">
    <location>
        <position position="228"/>
    </location>
    <ligand>
        <name>Ca(2+)</name>
        <dbReference type="ChEBI" id="CHEBI:29108"/>
        <label>2</label>
    </ligand>
</feature>
<feature type="binding site" evidence="6">
    <location>
        <position position="229"/>
    </location>
    <ligand>
        <name>Ca(2+)</name>
        <dbReference type="ChEBI" id="CHEBI:29108"/>
        <label>1</label>
    </ligand>
</feature>
<feature type="binding site" evidence="6">
    <location>
        <position position="230"/>
    </location>
    <ligand>
        <name>Ca(2+)</name>
        <dbReference type="ChEBI" id="CHEBI:29108"/>
        <label>1</label>
    </ligand>
</feature>
<feature type="binding site" evidence="6">
    <location>
        <position position="230"/>
    </location>
    <ligand>
        <name>Ca(2+)</name>
        <dbReference type="ChEBI" id="CHEBI:29108"/>
        <label>2</label>
    </ligand>
</feature>
<feature type="binding site" evidence="6">
    <location>
        <position position="230"/>
    </location>
    <ligand>
        <name>Ca(2+)</name>
        <dbReference type="ChEBI" id="CHEBI:29108"/>
        <label>3</label>
    </ligand>
</feature>
<feature type="binding site" evidence="6">
    <location>
        <position position="233"/>
    </location>
    <ligand>
        <name>Ca(2+)</name>
        <dbReference type="ChEBI" id="CHEBI:29108"/>
        <label>3</label>
    </ligand>
</feature>
<feature type="binding site" evidence="6">
    <location>
        <position position="234"/>
    </location>
    <ligand>
        <name>Ca(2+)</name>
        <dbReference type="ChEBI" id="CHEBI:29108"/>
        <label>3</label>
    </ligand>
</feature>
<feature type="binding site" evidence="6">
    <location>
        <position position="236"/>
    </location>
    <ligand>
        <name>Ca(2+)</name>
        <dbReference type="ChEBI" id="CHEBI:29108"/>
        <label>2</label>
    </ligand>
</feature>
<feature type="binding site" evidence="6">
    <location>
        <position position="236"/>
    </location>
    <ligand>
        <name>Ca(2+)</name>
        <dbReference type="ChEBI" id="CHEBI:29108"/>
        <label>3</label>
    </ligand>
</feature>
<feature type="binding site" evidence="6">
    <location>
        <position position="301"/>
    </location>
    <ligand>
        <name>Ca(2+)</name>
        <dbReference type="ChEBI" id="CHEBI:29108"/>
        <label>4</label>
    </ligand>
</feature>
<feature type="binding site" evidence="6">
    <location>
        <position position="307"/>
    </location>
    <ligand>
        <name>Ca(2+)</name>
        <dbReference type="ChEBI" id="CHEBI:29108"/>
        <label>4</label>
    </ligand>
</feature>
<feature type="binding site" evidence="6">
    <location>
        <position position="361"/>
    </location>
    <ligand>
        <name>Ca(2+)</name>
        <dbReference type="ChEBI" id="CHEBI:29108"/>
        <label>4</label>
    </ligand>
</feature>
<feature type="binding site" evidence="6">
    <location>
        <position position="363"/>
    </location>
    <ligand>
        <name>Ca(2+)</name>
        <dbReference type="ChEBI" id="CHEBI:29108"/>
        <label>4</label>
    </ligand>
</feature>
<feature type="modified residue" description="Phosphothreonine" evidence="3">
    <location>
        <position position="122"/>
    </location>
</feature>
<feature type="modified residue" description="Phosphothreonine" evidence="4">
    <location>
        <position position="125"/>
    </location>
</feature>
<feature type="modified residue" description="Phosphothreonine" evidence="3">
    <location>
        <position position="199"/>
    </location>
</feature>
<feature type="modified residue" description="Phosphotyrosine" evidence="4">
    <location>
        <position position="227"/>
    </location>
</feature>
<feature type="modified residue" description="Phosphothreonine" evidence="3">
    <location>
        <position position="383"/>
    </location>
</feature>
<feature type="glycosylation site" description="N-linked (GlcNAc...) asparagine" evidence="5">
    <location>
        <position position="29"/>
    </location>
</feature>
<feature type="sequence variant" id="VAR_086137" description="In CMS7B." evidence="13">
    <location>
        <begin position="269"/>
        <end position="419"/>
    </location>
</feature>
<feature type="sequence variant" id="VAR_072578" description="In CMS7A; dbSNP:rs587777781." evidence="11">
    <original>D</original>
    <variation>A</variation>
    <location>
        <position position="307"/>
    </location>
</feature>
<feature type="sequence variant" id="VAR_072579" description="In CMS7A; dbSNP:rs587777782." evidence="11">
    <original>P</original>
    <variation>L</variation>
    <location>
        <position position="308"/>
    </location>
</feature>
<feature type="sequence variant" id="VAR_086138" description="In CMS7B." evidence="13">
    <location>
        <begin position="309"/>
        <end position="419"/>
    </location>
</feature>
<feature type="sequence variant" id="VAR_086139" description="In CMS7A." evidence="14">
    <location>
        <begin position="361"/>
        <end position="365"/>
    </location>
</feature>
<feature type="sequence variant" id="VAR_086140" description="In CMS7A." evidence="16">
    <original>L</original>
    <variation>P</variation>
    <location>
        <position position="365"/>
    </location>
</feature>
<feature type="sequence conflict" description="In Ref. 1; BAC04354." evidence="17" ref="1">
    <original>V</original>
    <variation>G</variation>
    <location>
        <position position="310"/>
    </location>
</feature>
<feature type="helix" evidence="19">
    <location>
        <begin position="41"/>
        <end position="55"/>
    </location>
</feature>
<comment type="function">
    <text evidence="4 10">Exhibits calcium-dependent phospholipid and inositol polyphosphate binding properties (By similarity). May have a regulatory role in the membrane interactions during trafficking of synaptic vesicles at the active zone of the synapse (By similarity). Plays a role in dendrite formation by melanocytes (PubMed:23999003).</text>
</comment>
<comment type="cofactor">
    <cofactor evidence="6">
        <name>Ca(2+)</name>
        <dbReference type="ChEBI" id="CHEBI:29108"/>
    </cofactor>
    <text evidence="2">Binds 3 Ca(2+) ions per subunit. The ions are bound to the C2 domains.</text>
</comment>
<comment type="subunit">
    <text evidence="3 4 8 9 17">Homotetramer (Probable). Heterodimer; heterodimerizes with SYT1 in presence of calcium (By similarity). Interacts with STON2 (PubMed:11381094). Interacts with SCAMP5 (PubMed:19234194). Interacts with PRRT2 (By similarity).</text>
</comment>
<comment type="interaction">
    <interactant intactId="EBI-8032987">
        <id>Q8N9I0</id>
    </interactant>
    <interactant intactId="EBI-12059321">
        <id>P28330</id>
        <label>ACADL</label>
    </interactant>
    <organismsDiffer>false</organismsDiffer>
    <experiments>2</experiments>
</comment>
<comment type="interaction">
    <interactant intactId="EBI-8032987">
        <id>Q8N9I0</id>
    </interactant>
    <interactant intactId="EBI-12820279">
        <id>Q96PS8</id>
        <label>AQP10</label>
    </interactant>
    <organismsDiffer>false</organismsDiffer>
    <experiments>3</experiments>
</comment>
<comment type="interaction">
    <interactant intactId="EBI-8032987">
        <id>Q8N9I0</id>
    </interactant>
    <interactant intactId="EBI-752094">
        <id>Q12982</id>
        <label>BNIP2</label>
    </interactant>
    <organismsDiffer>false</organismsDiffer>
    <experiments>3</experiments>
</comment>
<comment type="interaction">
    <interactant intactId="EBI-8032987">
        <id>Q8N9I0</id>
    </interactant>
    <interactant intactId="EBI-9083477">
        <id>Q9P0B6</id>
        <label>CCDC167</label>
    </interactant>
    <organismsDiffer>false</organismsDiffer>
    <experiments>3</experiments>
</comment>
<comment type="interaction">
    <interactant intactId="EBI-8032987">
        <id>Q8N9I0</id>
    </interactant>
    <interactant intactId="EBI-9316372">
        <id>O14493</id>
        <label>CLDN4</label>
    </interactant>
    <organismsDiffer>false</organismsDiffer>
    <experiments>3</experiments>
</comment>
<comment type="interaction">
    <interactant intactId="EBI-8032987">
        <id>Q8N9I0</id>
    </interactant>
    <interactant intactId="EBI-7247651">
        <id>Q96MX0</id>
        <label>CMTM3</label>
    </interactant>
    <organismsDiffer>false</organismsDiffer>
    <experiments>3</experiments>
</comment>
<comment type="interaction">
    <interactant intactId="EBI-8032987">
        <id>Q8N9I0</id>
    </interactant>
    <interactant intactId="EBI-11337888">
        <id>Q7L5A8</id>
        <label>FA2H</label>
    </interactant>
    <organismsDiffer>false</organismsDiffer>
    <experiments>3</experiments>
</comment>
<comment type="interaction">
    <interactant intactId="EBI-8032987">
        <id>Q8N9I0</id>
    </interactant>
    <interactant intactId="EBI-714482">
        <id>Q9BWH2</id>
        <label>FUNDC2</label>
    </interactant>
    <organismsDiffer>false</organismsDiffer>
    <experiments>3</experiments>
</comment>
<comment type="interaction">
    <interactant intactId="EBI-8032987">
        <id>Q8N9I0</id>
    </interactant>
    <interactant intactId="EBI-466029">
        <id>P42858</id>
        <label>HTT</label>
    </interactant>
    <organismsDiffer>false</organismsDiffer>
    <experiments>10</experiments>
</comment>
<comment type="interaction">
    <interactant intactId="EBI-8032987">
        <id>Q8N9I0</id>
    </interactant>
    <interactant intactId="EBI-2568251">
        <id>P11215</id>
        <label>ITGAM</label>
    </interactant>
    <organismsDiffer>false</organismsDiffer>
    <experiments>3</experiments>
</comment>
<comment type="interaction">
    <interactant intactId="EBI-8032987">
        <id>Q8N9I0</id>
    </interactant>
    <interactant intactId="EBI-8070286">
        <id>O43561-2</id>
        <label>LAT</label>
    </interactant>
    <organismsDiffer>false</organismsDiffer>
    <experiments>3</experiments>
</comment>
<comment type="interaction">
    <interactant intactId="EBI-8032987">
        <id>Q8N9I0</id>
    </interactant>
    <interactant intactId="EBI-750078">
        <id>Q13021</id>
        <label>MALL</label>
    </interactant>
    <organismsDiffer>false</organismsDiffer>
    <experiments>3</experiments>
</comment>
<comment type="interaction">
    <interactant intactId="EBI-8032987">
        <id>Q8N9I0</id>
    </interactant>
    <interactant intactId="EBI-8449636">
        <id>P30301</id>
        <label>MIP</label>
    </interactant>
    <organismsDiffer>false</organismsDiffer>
    <experiments>3</experiments>
</comment>
<comment type="interaction">
    <interactant intactId="EBI-8032987">
        <id>Q8N9I0</id>
    </interactant>
    <interactant intactId="EBI-3921185">
        <id>Q9H115</id>
        <label>NAPB</label>
    </interactant>
    <organismsDiffer>false</organismsDiffer>
    <experiments>3</experiments>
</comment>
<comment type="interaction">
    <interactant intactId="EBI-8032987">
        <id>Q8N9I0</id>
    </interactant>
    <interactant intactId="EBI-721750">
        <id>Q8N138</id>
        <label>ORMDL3</label>
    </interactant>
    <organismsDiffer>false</organismsDiffer>
    <experiments>3</experiments>
</comment>
<comment type="interaction">
    <interactant intactId="EBI-8032987">
        <id>Q8N9I0</id>
    </interactant>
    <interactant intactId="EBI-10485931">
        <id>Q5VZY2</id>
        <label>PLPP4</label>
    </interactant>
    <organismsDiffer>false</organismsDiffer>
    <experiments>3</experiments>
</comment>
<comment type="interaction">
    <interactant intactId="EBI-8032987">
        <id>Q8N9I0</id>
    </interactant>
    <interactant intactId="EBI-2845982">
        <id>Q01453</id>
        <label>PMP22</label>
    </interactant>
    <organismsDiffer>false</organismsDiffer>
    <experiments>3</experiments>
</comment>
<comment type="interaction">
    <interactant intactId="EBI-8032987">
        <id>Q8N9I0</id>
    </interactant>
    <interactant intactId="EBI-10262251">
        <id>Q8IWU4</id>
        <label>SLC30A8</label>
    </interactant>
    <organismsDiffer>false</organismsDiffer>
    <experiments>3</experiments>
</comment>
<comment type="interaction">
    <interactant intactId="EBI-8032987">
        <id>Q8N9I0</id>
    </interactant>
    <interactant intactId="EBI-12870360">
        <id>P78382</id>
        <label>SLC35A1</label>
    </interactant>
    <organismsDiffer>false</organismsDiffer>
    <experiments>3</experiments>
</comment>
<comment type="interaction">
    <interactant intactId="EBI-8032987">
        <id>Q8N9I0</id>
    </interactant>
    <interactant intactId="EBI-12363689">
        <id>Q96G79</id>
        <label>SLC35A4</label>
    </interactant>
    <organismsDiffer>false</organismsDiffer>
    <experiments>3</experiments>
</comment>
<comment type="interaction">
    <interactant intactId="EBI-8032987">
        <id>Q8N9I0</id>
    </interactant>
    <interactant intactId="EBI-524909">
        <id>P21579</id>
        <label>SYT1</label>
    </interactant>
    <organismsDiffer>false</organismsDiffer>
    <experiments>4</experiments>
</comment>
<comment type="interaction">
    <interactant intactId="EBI-8032987">
        <id>Q8N9I0</id>
    </interactant>
    <interactant intactId="EBI-714319">
        <id>P02787</id>
        <label>TF</label>
    </interactant>
    <organismsDiffer>false</organismsDiffer>
    <experiments>3</experiments>
</comment>
<comment type="interaction">
    <interactant intactId="EBI-8032987">
        <id>Q8N9I0</id>
    </interactant>
    <interactant intactId="EBI-311394">
        <id>Q9C0I4</id>
        <label>THSD7B</label>
    </interactant>
    <organismsDiffer>false</organismsDiffer>
    <experiments>3</experiments>
</comment>
<comment type="interaction">
    <interactant intactId="EBI-8032987">
        <id>Q8N9I0</id>
    </interactant>
    <interactant intactId="EBI-12845616">
        <id>Q6UX40</id>
        <label>TMEM107</label>
    </interactant>
    <organismsDiffer>false</organismsDiffer>
    <experiments>3</experiments>
</comment>
<comment type="interaction">
    <interactant intactId="EBI-8032987">
        <id>Q8N9I0</id>
    </interactant>
    <interactant intactId="EBI-12195227">
        <id>Q8NBD8</id>
        <label>TMEM229B</label>
    </interactant>
    <organismsDiffer>false</organismsDiffer>
    <experiments>3</experiments>
</comment>
<comment type="interaction">
    <interactant intactId="EBI-8032987">
        <id>Q8N9I0</id>
    </interactant>
    <interactant intactId="EBI-12195249">
        <id>Q5TGU0</id>
        <label>TSPO2</label>
    </interactant>
    <organismsDiffer>false</organismsDiffer>
    <experiments>3</experiments>
</comment>
<comment type="interaction">
    <interactant intactId="EBI-8032987">
        <id>Q8N9I0</id>
    </interactant>
    <interactant intactId="EBI-744953">
        <id>O75379</id>
        <label>VAMP4</label>
    </interactant>
    <organismsDiffer>false</organismsDiffer>
    <experiments>3</experiments>
</comment>
<comment type="subcellular location">
    <subcellularLocation>
        <location evidence="3">Cytoplasmic vesicle</location>
        <location evidence="3">Secretory vesicle</location>
        <location evidence="3">Synaptic vesicle membrane</location>
        <topology evidence="5">Single-pass membrane protein</topology>
    </subcellularLocation>
    <subcellularLocation>
        <location evidence="2">Cytoplasmic vesicle</location>
        <location evidence="2">Secretory vesicle</location>
        <location evidence="2">Chromaffin granule membrane</location>
        <topology evidence="3">Single-pass membrane protein</topology>
    </subcellularLocation>
    <subcellularLocation>
        <location evidence="3">Cytoplasm</location>
    </subcellularLocation>
</comment>
<comment type="tissue specificity">
    <text evidence="10 15">Expressed at the neuromuscular junction (PubMed:33659639). Expressed in melanocytes (PubMed:23999003).</text>
</comment>
<comment type="domain">
    <text evidence="4">The first C2 domain mediates Ca(2+)-dependent phospholipid binding.</text>
</comment>
<comment type="domain">
    <text evidence="4">The second C2 domain mediates interaction with Stonin 2. The second C2 domain mediates phospholipid and inositol polyphosphate binding in a calcium-independent manner.</text>
</comment>
<comment type="PTM">
    <text evidence="3">Phosphorylation at Thr-199 by WNK1, changes the calcium requirement for SYT2-binding to phospholipid membranes.</text>
</comment>
<comment type="disease" evidence="11 14 16">
    <disease id="DI-04255">
        <name>Myasthenic syndrome, congenital, 7A, presynaptic, and distal motor neuropathy, autosomal dominant</name>
        <acronym>CMS7A</acronym>
        <description>A form of congenital myasthenic syndrome, a group of disorders characterized by failure of neuromuscular transmission, including pre-synaptic, synaptic, and post-synaptic disorders that are not of autoimmune origin. Clinical features are easy fatigability and muscle weakness. CMS7A is an autosomal dominant, presynaptic disorder resembling Lambert-Eaton myasthenic syndrome. Affected individuals have a variable degree of proximal and distal limb weakness, muscle fatigue that improves with rest, mild gait difficulties, and reduced or absent deep tendon reflexes.</description>
        <dbReference type="MIM" id="616040"/>
    </disease>
    <text>The disease is caused by variants affecting the gene represented in this entry.</text>
</comment>
<comment type="disease" evidence="12 13 15">
    <disease id="DI-06179">
        <name>Myasthenic syndrome, congenital, 7B, presynaptic, autosomal recessive</name>
        <acronym>CMS7B</acronym>
        <description>An autosomal recessive form of congenital myasthenic syndrome, a group of disorders characterized by failure of neuromuscular transmission, including pre-synaptic, synaptic, and post-synaptic disorders that are not of autoimmune origin. Clinical features are easy fatigability and muscle weakness. CMS7B is characterized by defects at the pre-synaptic neuromuscular junction and severe generalized muscle weakness apparent from birth. Decreased fetal movements may be apparent in utero. Affected infants have generalized hypotonia, head lag, and facial muscle weakness with ptosis. Some patients may have respiratory involvement.</description>
        <dbReference type="MIM" id="619461"/>
    </disease>
    <text>The disease is caused by variants affecting the gene represented in this entry.</text>
</comment>
<comment type="similarity">
    <text evidence="17">Belongs to the synaptotagmin family.</text>
</comment>
<dbReference type="EMBL" id="AK090672">
    <property type="protein sequence ID" value="BAC03500.1"/>
    <property type="molecule type" value="mRNA"/>
</dbReference>
<dbReference type="EMBL" id="AK094430">
    <property type="protein sequence ID" value="BAC04354.1"/>
    <property type="molecule type" value="mRNA"/>
</dbReference>
<dbReference type="EMBL" id="BC100814">
    <property type="protein sequence ID" value="AAI00815.1"/>
    <property type="molecule type" value="mRNA"/>
</dbReference>
<dbReference type="EMBL" id="BC100815">
    <property type="protein sequence ID" value="AAI00816.1"/>
    <property type="molecule type" value="mRNA"/>
</dbReference>
<dbReference type="EMBL" id="BC100817">
    <property type="protein sequence ID" value="AAI00818.1"/>
    <property type="molecule type" value="mRNA"/>
</dbReference>
<dbReference type="CCDS" id="CCDS1427.1"/>
<dbReference type="RefSeq" id="NP_001129976.1">
    <property type="nucleotide sequence ID" value="NM_001136504.1"/>
</dbReference>
<dbReference type="RefSeq" id="NP_796376.2">
    <property type="nucleotide sequence ID" value="NM_177402.4"/>
</dbReference>
<dbReference type="RefSeq" id="XP_016855802.1">
    <property type="nucleotide sequence ID" value="XM_017000313.2"/>
</dbReference>
<dbReference type="RefSeq" id="XP_054190379.1">
    <property type="nucleotide sequence ID" value="XM_054334404.1"/>
</dbReference>
<dbReference type="PDB" id="6G5G">
    <property type="method" value="X-ray"/>
    <property type="resolution" value="2.00 A"/>
    <property type="chains" value="P=37-57"/>
</dbReference>
<dbReference type="PDBsum" id="6G5G"/>
<dbReference type="SMR" id="Q8N9I0"/>
<dbReference type="BioGRID" id="126085">
    <property type="interactions" value="129"/>
</dbReference>
<dbReference type="ELM" id="Q8N9I0"/>
<dbReference type="FunCoup" id="Q8N9I0">
    <property type="interactions" value="676"/>
</dbReference>
<dbReference type="IntAct" id="Q8N9I0">
    <property type="interactions" value="129"/>
</dbReference>
<dbReference type="MINT" id="Q8N9I0"/>
<dbReference type="STRING" id="9606.ENSP00000356237"/>
<dbReference type="DrugBank" id="DB00042">
    <property type="generic name" value="Botulinum toxin type B"/>
</dbReference>
<dbReference type="GlyCosmos" id="Q8N9I0">
    <property type="glycosylation" value="1 site, No reported glycans"/>
</dbReference>
<dbReference type="GlyGen" id="Q8N9I0">
    <property type="glycosylation" value="2 sites, 1 O-linked glycan (1 site)"/>
</dbReference>
<dbReference type="iPTMnet" id="Q8N9I0"/>
<dbReference type="PhosphoSitePlus" id="Q8N9I0"/>
<dbReference type="SwissPalm" id="Q8N9I0"/>
<dbReference type="BioMuta" id="SYT2"/>
<dbReference type="DMDM" id="116242811"/>
<dbReference type="jPOST" id="Q8N9I0"/>
<dbReference type="MassIVE" id="Q8N9I0"/>
<dbReference type="PaxDb" id="9606-ENSP00000356236"/>
<dbReference type="PeptideAtlas" id="Q8N9I0"/>
<dbReference type="ProteomicsDB" id="72541"/>
<dbReference type="Antibodypedia" id="34528">
    <property type="antibodies" value="275 antibodies from 31 providers"/>
</dbReference>
<dbReference type="DNASU" id="127833"/>
<dbReference type="Ensembl" id="ENST00000367267.5">
    <property type="protein sequence ID" value="ENSP00000356236.1"/>
    <property type="gene ID" value="ENSG00000143858.12"/>
</dbReference>
<dbReference type="Ensembl" id="ENST00000367268.5">
    <property type="protein sequence ID" value="ENSP00000356237.4"/>
    <property type="gene ID" value="ENSG00000143858.12"/>
</dbReference>
<dbReference type="GeneID" id="127833"/>
<dbReference type="KEGG" id="hsa:127833"/>
<dbReference type="MANE-Select" id="ENST00000367268.5">
    <property type="protein sequence ID" value="ENSP00000356237.4"/>
    <property type="RefSeq nucleotide sequence ID" value="NM_177402.5"/>
    <property type="RefSeq protein sequence ID" value="NP_796376.2"/>
</dbReference>
<dbReference type="UCSC" id="uc001gye.4">
    <property type="organism name" value="human"/>
</dbReference>
<dbReference type="AGR" id="HGNC:11510"/>
<dbReference type="CTD" id="127833"/>
<dbReference type="DisGeNET" id="127833"/>
<dbReference type="GeneCards" id="SYT2"/>
<dbReference type="HGNC" id="HGNC:11510">
    <property type="gene designation" value="SYT2"/>
</dbReference>
<dbReference type="HPA" id="ENSG00000143858">
    <property type="expression patterns" value="Tissue enriched (brain)"/>
</dbReference>
<dbReference type="MalaCards" id="SYT2"/>
<dbReference type="MIM" id="600104">
    <property type="type" value="gene"/>
</dbReference>
<dbReference type="MIM" id="616040">
    <property type="type" value="phenotype"/>
</dbReference>
<dbReference type="MIM" id="619461">
    <property type="type" value="phenotype"/>
</dbReference>
<dbReference type="neXtProt" id="NX_Q8N9I0"/>
<dbReference type="OpenTargets" id="ENSG00000143858"/>
<dbReference type="Orphanet" id="98914">
    <property type="disease" value="Presynaptic congenital myasthenic syndromes"/>
</dbReference>
<dbReference type="PharmGKB" id="PA36291"/>
<dbReference type="VEuPathDB" id="HostDB:ENSG00000143858"/>
<dbReference type="eggNOG" id="KOG1028">
    <property type="taxonomic scope" value="Eukaryota"/>
</dbReference>
<dbReference type="GeneTree" id="ENSGT00940000157586"/>
<dbReference type="HOGENOM" id="CLU_023008_0_1_1"/>
<dbReference type="InParanoid" id="Q8N9I0"/>
<dbReference type="OMA" id="RCILGCS"/>
<dbReference type="OrthoDB" id="67700at2759"/>
<dbReference type="PAN-GO" id="Q8N9I0">
    <property type="GO annotations" value="15 GO annotations based on evolutionary models"/>
</dbReference>
<dbReference type="PhylomeDB" id="Q8N9I0"/>
<dbReference type="TreeFam" id="TF315600"/>
<dbReference type="PathwayCommons" id="Q8N9I0"/>
<dbReference type="Reactome" id="R-HSA-5250958">
    <property type="pathway name" value="Toxicity of botulinum toxin type B (botB)"/>
</dbReference>
<dbReference type="Reactome" id="R-HSA-6794361">
    <property type="pathway name" value="Neurexins and neuroligins"/>
</dbReference>
<dbReference type="Reactome" id="R-HSA-8856825">
    <property type="pathway name" value="Cargo recognition for clathrin-mediated endocytosis"/>
</dbReference>
<dbReference type="Reactome" id="R-HSA-8856828">
    <property type="pathway name" value="Clathrin-mediated endocytosis"/>
</dbReference>
<dbReference type="SignaLink" id="Q8N9I0"/>
<dbReference type="SIGNOR" id="Q8N9I0"/>
<dbReference type="BioGRID-ORCS" id="127833">
    <property type="hits" value="13 hits in 1154 CRISPR screens"/>
</dbReference>
<dbReference type="ChiTaRS" id="SYT2">
    <property type="organism name" value="human"/>
</dbReference>
<dbReference type="GeneWiki" id="SYT2"/>
<dbReference type="GenomeRNAi" id="127833"/>
<dbReference type="Pharos" id="Q8N9I0">
    <property type="development level" value="Tbio"/>
</dbReference>
<dbReference type="PRO" id="PR:Q8N9I0"/>
<dbReference type="Proteomes" id="UP000005640">
    <property type="component" value="Chromosome 1"/>
</dbReference>
<dbReference type="RNAct" id="Q8N9I0">
    <property type="molecule type" value="protein"/>
</dbReference>
<dbReference type="Bgee" id="ENSG00000143858">
    <property type="expression patterns" value="Expressed in pons and 145 other cell types or tissues"/>
</dbReference>
<dbReference type="GO" id="GO:0030424">
    <property type="term" value="C:axon"/>
    <property type="evidence" value="ECO:0000318"/>
    <property type="project" value="GO_Central"/>
</dbReference>
<dbReference type="GO" id="GO:0042584">
    <property type="term" value="C:chromaffin granule membrane"/>
    <property type="evidence" value="ECO:0007669"/>
    <property type="project" value="UniProtKB-SubCell"/>
</dbReference>
<dbReference type="GO" id="GO:0030669">
    <property type="term" value="C:clathrin-coated endocytic vesicle membrane"/>
    <property type="evidence" value="ECO:0000304"/>
    <property type="project" value="Reactome"/>
</dbReference>
<dbReference type="GO" id="GO:0031045">
    <property type="term" value="C:dense core granule"/>
    <property type="evidence" value="ECO:0000318"/>
    <property type="project" value="GO_Central"/>
</dbReference>
<dbReference type="GO" id="GO:0070382">
    <property type="term" value="C:exocytic vesicle"/>
    <property type="evidence" value="ECO:0000318"/>
    <property type="project" value="GO_Central"/>
</dbReference>
<dbReference type="GO" id="GO:0005886">
    <property type="term" value="C:plasma membrane"/>
    <property type="evidence" value="ECO:0000318"/>
    <property type="project" value="GO_Central"/>
</dbReference>
<dbReference type="GO" id="GO:0030672">
    <property type="term" value="C:synaptic vesicle membrane"/>
    <property type="evidence" value="ECO:0000318"/>
    <property type="project" value="GO_Central"/>
</dbReference>
<dbReference type="GO" id="GO:0061891">
    <property type="term" value="F:calcium ion sensor activity"/>
    <property type="evidence" value="ECO:0000318"/>
    <property type="project" value="GO_Central"/>
</dbReference>
<dbReference type="GO" id="GO:0005544">
    <property type="term" value="F:calcium-dependent phospholipid binding"/>
    <property type="evidence" value="ECO:0000250"/>
    <property type="project" value="UniProtKB"/>
</dbReference>
<dbReference type="GO" id="GO:0043533">
    <property type="term" value="F:inositol 1,3,4,5 tetrakisphosphate binding"/>
    <property type="evidence" value="ECO:0000250"/>
    <property type="project" value="UniProtKB"/>
</dbReference>
<dbReference type="GO" id="GO:0046872">
    <property type="term" value="F:metal ion binding"/>
    <property type="evidence" value="ECO:0007669"/>
    <property type="project" value="UniProtKB-KW"/>
</dbReference>
<dbReference type="GO" id="GO:0000149">
    <property type="term" value="F:SNARE binding"/>
    <property type="evidence" value="ECO:0000318"/>
    <property type="project" value="GO_Central"/>
</dbReference>
<dbReference type="GO" id="GO:0099502">
    <property type="term" value="P:calcium-dependent activation of synaptic vesicle fusion"/>
    <property type="evidence" value="ECO:0000318"/>
    <property type="project" value="GO_Central"/>
</dbReference>
<dbReference type="GO" id="GO:0030154">
    <property type="term" value="P:cell differentiation"/>
    <property type="evidence" value="ECO:0007669"/>
    <property type="project" value="UniProtKB-KW"/>
</dbReference>
<dbReference type="GO" id="GO:1903861">
    <property type="term" value="P:positive regulation of dendrite extension"/>
    <property type="evidence" value="ECO:0000314"/>
    <property type="project" value="UniProtKB"/>
</dbReference>
<dbReference type="GO" id="GO:0017158">
    <property type="term" value="P:regulation of calcium ion-dependent exocytosis"/>
    <property type="evidence" value="ECO:0000318"/>
    <property type="project" value="GO_Central"/>
</dbReference>
<dbReference type="GO" id="GO:2000300">
    <property type="term" value="P:regulation of synaptic vesicle exocytosis"/>
    <property type="evidence" value="ECO:0000318"/>
    <property type="project" value="GO_Central"/>
</dbReference>
<dbReference type="GO" id="GO:0016192">
    <property type="term" value="P:vesicle-mediated transport"/>
    <property type="evidence" value="ECO:0000318"/>
    <property type="project" value="GO_Central"/>
</dbReference>
<dbReference type="CDD" id="cd08385">
    <property type="entry name" value="C2A_Synaptotagmin-1-5-6-9-10"/>
    <property type="match status" value="1"/>
</dbReference>
<dbReference type="CDD" id="cd08402">
    <property type="entry name" value="C2B_Synaptotagmin-1"/>
    <property type="match status" value="1"/>
</dbReference>
<dbReference type="CDD" id="cd21964">
    <property type="entry name" value="Syt2_N"/>
    <property type="match status" value="1"/>
</dbReference>
<dbReference type="FunFam" id="2.60.40.150:FF:000007">
    <property type="entry name" value="Synaptotagmin 1"/>
    <property type="match status" value="1"/>
</dbReference>
<dbReference type="FunFam" id="2.60.40.150:FF:000016">
    <property type="entry name" value="Synaptotagmin 1"/>
    <property type="match status" value="1"/>
</dbReference>
<dbReference type="Gene3D" id="2.60.40.150">
    <property type="entry name" value="C2 domain"/>
    <property type="match status" value="2"/>
</dbReference>
<dbReference type="InterPro" id="IPR000008">
    <property type="entry name" value="C2_dom"/>
</dbReference>
<dbReference type="InterPro" id="IPR035892">
    <property type="entry name" value="C2_domain_sf"/>
</dbReference>
<dbReference type="InterPro" id="IPR001565">
    <property type="entry name" value="Synaptotagmin"/>
</dbReference>
<dbReference type="PANTHER" id="PTHR10024">
    <property type="entry name" value="SYNAPTOTAGMIN"/>
    <property type="match status" value="1"/>
</dbReference>
<dbReference type="PANTHER" id="PTHR10024:SF223">
    <property type="entry name" value="SYNAPTOTAGMIN-2"/>
    <property type="match status" value="1"/>
</dbReference>
<dbReference type="Pfam" id="PF00168">
    <property type="entry name" value="C2"/>
    <property type="match status" value="2"/>
</dbReference>
<dbReference type="PRINTS" id="PR00360">
    <property type="entry name" value="C2DOMAIN"/>
</dbReference>
<dbReference type="PRINTS" id="PR00399">
    <property type="entry name" value="SYNAPTOTAGMN"/>
</dbReference>
<dbReference type="SMART" id="SM00239">
    <property type="entry name" value="C2"/>
    <property type="match status" value="2"/>
</dbReference>
<dbReference type="SUPFAM" id="SSF49562">
    <property type="entry name" value="C2 domain (Calcium/lipid-binding domain, CaLB)"/>
    <property type="match status" value="2"/>
</dbReference>
<dbReference type="PROSITE" id="PS50004">
    <property type="entry name" value="C2"/>
    <property type="match status" value="2"/>
</dbReference>
<reference key="1">
    <citation type="journal article" date="2004" name="Nat. Genet.">
        <title>Complete sequencing and characterization of 21,243 full-length human cDNAs.</title>
        <authorList>
            <person name="Ota T."/>
            <person name="Suzuki Y."/>
            <person name="Nishikawa T."/>
            <person name="Otsuki T."/>
            <person name="Sugiyama T."/>
            <person name="Irie R."/>
            <person name="Wakamatsu A."/>
            <person name="Hayashi K."/>
            <person name="Sato H."/>
            <person name="Nagai K."/>
            <person name="Kimura K."/>
            <person name="Makita H."/>
            <person name="Sekine M."/>
            <person name="Obayashi M."/>
            <person name="Nishi T."/>
            <person name="Shibahara T."/>
            <person name="Tanaka T."/>
            <person name="Ishii S."/>
            <person name="Yamamoto J."/>
            <person name="Saito K."/>
            <person name="Kawai Y."/>
            <person name="Isono Y."/>
            <person name="Nakamura Y."/>
            <person name="Nagahari K."/>
            <person name="Murakami K."/>
            <person name="Yasuda T."/>
            <person name="Iwayanagi T."/>
            <person name="Wagatsuma M."/>
            <person name="Shiratori A."/>
            <person name="Sudo H."/>
            <person name="Hosoiri T."/>
            <person name="Kaku Y."/>
            <person name="Kodaira H."/>
            <person name="Kondo H."/>
            <person name="Sugawara M."/>
            <person name="Takahashi M."/>
            <person name="Kanda K."/>
            <person name="Yokoi T."/>
            <person name="Furuya T."/>
            <person name="Kikkawa E."/>
            <person name="Omura Y."/>
            <person name="Abe K."/>
            <person name="Kamihara K."/>
            <person name="Katsuta N."/>
            <person name="Sato K."/>
            <person name="Tanikawa M."/>
            <person name="Yamazaki M."/>
            <person name="Ninomiya K."/>
            <person name="Ishibashi T."/>
            <person name="Yamashita H."/>
            <person name="Murakawa K."/>
            <person name="Fujimori K."/>
            <person name="Tanai H."/>
            <person name="Kimata M."/>
            <person name="Watanabe M."/>
            <person name="Hiraoka S."/>
            <person name="Chiba Y."/>
            <person name="Ishida S."/>
            <person name="Ono Y."/>
            <person name="Takiguchi S."/>
            <person name="Watanabe S."/>
            <person name="Yosida M."/>
            <person name="Hotuta T."/>
            <person name="Kusano J."/>
            <person name="Kanehori K."/>
            <person name="Takahashi-Fujii A."/>
            <person name="Hara H."/>
            <person name="Tanase T.-O."/>
            <person name="Nomura Y."/>
            <person name="Togiya S."/>
            <person name="Komai F."/>
            <person name="Hara R."/>
            <person name="Takeuchi K."/>
            <person name="Arita M."/>
            <person name="Imose N."/>
            <person name="Musashino K."/>
            <person name="Yuuki H."/>
            <person name="Oshima A."/>
            <person name="Sasaki N."/>
            <person name="Aotsuka S."/>
            <person name="Yoshikawa Y."/>
            <person name="Matsunawa H."/>
            <person name="Ichihara T."/>
            <person name="Shiohata N."/>
            <person name="Sano S."/>
            <person name="Moriya S."/>
            <person name="Momiyama H."/>
            <person name="Satoh N."/>
            <person name="Takami S."/>
            <person name="Terashima Y."/>
            <person name="Suzuki O."/>
            <person name="Nakagawa S."/>
            <person name="Senoh A."/>
            <person name="Mizoguchi H."/>
            <person name="Goto Y."/>
            <person name="Shimizu F."/>
            <person name="Wakebe H."/>
            <person name="Hishigaki H."/>
            <person name="Watanabe T."/>
            <person name="Sugiyama A."/>
            <person name="Takemoto M."/>
            <person name="Kawakami B."/>
            <person name="Yamazaki M."/>
            <person name="Watanabe K."/>
            <person name="Kumagai A."/>
            <person name="Itakura S."/>
            <person name="Fukuzumi Y."/>
            <person name="Fujimori Y."/>
            <person name="Komiyama M."/>
            <person name="Tashiro H."/>
            <person name="Tanigami A."/>
            <person name="Fujiwara T."/>
            <person name="Ono T."/>
            <person name="Yamada K."/>
            <person name="Fujii Y."/>
            <person name="Ozaki K."/>
            <person name="Hirao M."/>
            <person name="Ohmori Y."/>
            <person name="Kawabata A."/>
            <person name="Hikiji T."/>
            <person name="Kobatake N."/>
            <person name="Inagaki H."/>
            <person name="Ikema Y."/>
            <person name="Okamoto S."/>
            <person name="Okitani R."/>
            <person name="Kawakami T."/>
            <person name="Noguchi S."/>
            <person name="Itoh T."/>
            <person name="Shigeta K."/>
            <person name="Senba T."/>
            <person name="Matsumura K."/>
            <person name="Nakajima Y."/>
            <person name="Mizuno T."/>
            <person name="Morinaga M."/>
            <person name="Sasaki M."/>
            <person name="Togashi T."/>
            <person name="Oyama M."/>
            <person name="Hata H."/>
            <person name="Watanabe M."/>
            <person name="Komatsu T."/>
            <person name="Mizushima-Sugano J."/>
            <person name="Satoh T."/>
            <person name="Shirai Y."/>
            <person name="Takahashi Y."/>
            <person name="Nakagawa K."/>
            <person name="Okumura K."/>
            <person name="Nagase T."/>
            <person name="Nomura N."/>
            <person name="Kikuchi H."/>
            <person name="Masuho Y."/>
            <person name="Yamashita R."/>
            <person name="Nakai K."/>
            <person name="Yada T."/>
            <person name="Nakamura Y."/>
            <person name="Ohara O."/>
            <person name="Isogai T."/>
            <person name="Sugano S."/>
        </authorList>
    </citation>
    <scope>NUCLEOTIDE SEQUENCE [LARGE SCALE MRNA]</scope>
    <source>
        <tissue>Cerebellum</tissue>
    </source>
</reference>
<reference key="2">
    <citation type="journal article" date="2004" name="Genome Res.">
        <title>The status, quality, and expansion of the NIH full-length cDNA project: the Mammalian Gene Collection (MGC).</title>
        <authorList>
            <consortium name="The MGC Project Team"/>
        </authorList>
    </citation>
    <scope>NUCLEOTIDE SEQUENCE [LARGE SCALE MRNA]</scope>
</reference>
<reference key="3">
    <citation type="journal article" date="2001" name="J. Cell Biol.">
        <title>Stonin 2: an adaptor-like protein that interacts with components of the endocytic machinery.</title>
        <authorList>
            <person name="Martina J.A."/>
            <person name="Bonangelino C.J."/>
            <person name="Aguilar R.C."/>
            <person name="Bonifacino J.S."/>
        </authorList>
    </citation>
    <scope>INTERACTION WITH STON2</scope>
</reference>
<reference key="4">
    <citation type="journal article" date="2009" name="J. Immunol.">
        <title>Human SCAMP5, a novel secretory carrier membrane protein, facilitates calcium-triggered cytokine secretion by interaction with SNARE machinery.</title>
        <authorList>
            <person name="Han C."/>
            <person name="Chen T."/>
            <person name="Yang M."/>
            <person name="Li N."/>
            <person name="Liu H."/>
            <person name="Cao X."/>
        </authorList>
    </citation>
    <scope>INTERACTION WITH SCAMP5</scope>
</reference>
<reference key="5">
    <citation type="journal article" date="2013" name="J. Dermatol. Sci.">
        <title>SYT14L, especially its C2 domain, is involved in regulating melanocyte differentiation.</title>
        <authorList>
            <person name="Yoo J.C."/>
            <person name="Lim T.Y."/>
            <person name="Park J.S."/>
            <person name="Hah Y.S."/>
            <person name="Park N."/>
            <person name="Hong S.G."/>
            <person name="Park J.Y."/>
            <person name="Yoon T.J."/>
        </authorList>
    </citation>
    <scope>FUNCTION</scope>
    <scope>TISSUE SPECIFICITY</scope>
</reference>
<reference key="6">
    <citation type="journal article" date="2014" name="Am. J. Hum. Genet.">
        <title>Synaptotagmin 2 mutations cause an autosomal-dominant form of lambert-eaton myasthenic syndrome and nonprogressive motor neuropathy.</title>
        <authorList>
            <person name="Herrmann D.N."/>
            <person name="Horvath R."/>
            <person name="Sowden J.E."/>
            <person name="Gonzales M."/>
            <person name="Sanchez-Mejias A."/>
            <person name="Guan Z."/>
            <person name="Whittaker R.G."/>
            <person name="Almodovar J.L."/>
            <person name="Lane M."/>
            <person name="Bansagi B."/>
            <person name="Pyle A."/>
            <person name="Boczonadi V."/>
            <person name="Lochmuller H."/>
            <person name="Griffin H."/>
            <person name="Chinnery P.F."/>
            <person name="Lloyd T.E."/>
            <person name="Littleton J.T."/>
            <person name="Zuchner S."/>
        </authorList>
    </citation>
    <scope>INVOLVEMENT IN CMS7A</scope>
    <scope>VARIANTS CMS7A ALA-307 AND LEU-308</scope>
</reference>
<reference key="7">
    <citation type="journal article" date="2020" name="Am. J. Med. Genet. A">
        <title>Recessive congenital myasthenic syndrome caused by a homozygous mutation in SYT2 altering a highly conserved C-terminal amino acid sequence.</title>
        <authorList>
            <person name="Maselli R.A."/>
            <person name="van der Linden H. Jr."/>
            <person name="Ferns M."/>
        </authorList>
    </citation>
    <scope>INVOLVEMENT IN CMS7B</scope>
</reference>
<reference key="8">
    <citation type="journal article" date="2020" name="Am. J. Med. Genet. A">
        <title>Biallelic loss of function variants in SYT2 cause a treatable congenital onset presynaptic myasthenic syndrome.</title>
        <authorList>
            <person name="Donkervoort S."/>
            <person name="Mohassel P."/>
            <person name="Laugwitz L."/>
            <person name="Zaki M.S."/>
            <person name="Kamsteeg E.J."/>
            <person name="Maroofian R."/>
            <person name="Chao K.R."/>
            <person name="Verschuuren-Bemelmans C.C."/>
            <person name="Horber V."/>
            <person name="Fock A.J.M."/>
            <person name="McCarty R.M."/>
            <person name="Jain M.S."/>
            <person name="Biancavilla V."/>
            <person name="McMacken G."/>
            <person name="Nalls M."/>
            <person name="Voermans N.C."/>
            <person name="Elbendary H.M."/>
            <person name="Snyder M."/>
            <person name="Cai C."/>
            <person name="Lehky T.J."/>
            <person name="Stanley V."/>
            <person name="Iannaccone S.T."/>
            <person name="Foley A.R."/>
            <person name="Lochmueller H."/>
            <person name="Gleeson J."/>
            <person name="Houlden H."/>
            <person name="Haack T.B."/>
            <person name="Horvath R."/>
            <person name="Boennemann C.G."/>
        </authorList>
    </citation>
    <scope>VARIANTS CMS7B 269-GLU--LYS-419 DEL AND 309-TYR--LYS-419 DEL</scope>
</reference>
<reference key="9">
    <citation type="journal article" date="2020" name="Neurol. Genet.">
        <title>New recessive mutations in SYT2 causing severe presynaptic congenital myasthenic syndromes.</title>
        <authorList>
            <person name="Bauche S."/>
            <person name="Sureau A."/>
            <person name="Sternberg D."/>
            <person name="Rendu J."/>
            <person name="Buon C."/>
            <person name="Messeant J."/>
            <person name="Boex M."/>
            <person name="Furling D."/>
            <person name="Faure J."/>
            <person name="Latypova X."/>
            <person name="Gelot A.B."/>
            <person name="Mayer M."/>
            <person name="Mary P."/>
            <person name="Whalen S."/>
            <person name="Fournier E."/>
            <person name="Cloix I."/>
            <person name="Remerand G."/>
            <person name="Laffargue F."/>
            <person name="Nougues M.C."/>
            <person name="Fontaine B."/>
            <person name="Eymard B."/>
            <person name="Isapof A."/>
            <person name="Strochlic L."/>
        </authorList>
    </citation>
    <scope>INVOLVEMENT IN CMS7B</scope>
    <scope>TISSUE SPECIFICITY</scope>
</reference>
<reference key="10">
    <citation type="journal article" date="2021" name="J. Peripher. Nerv. Syst.">
        <title>A new de novo SYT2 mutation presenting as distal weakness. Neuropathy or neuromuscular junction dysfunction?</title>
        <authorList>
            <person name="Fionda L."/>
            <person name="Turon-Sans J."/>
            <person name="Fuentes Prior P."/>
            <person name="Bernal Noguera S."/>
            <person name="Cortes-Vicente E."/>
            <person name="Lopez-Perez M.A."/>
            <person name="Gallardo E."/>
            <person name="Rojas-Garcia R."/>
        </authorList>
    </citation>
    <scope>VARIANT CMS7A 361-ASP--LEU-365 DEL</scope>
</reference>
<reference key="11">
    <citation type="journal article" date="2021" name="J. Peripher. Nerv. Syst.">
        <authorList>
            <person name="Fionda L."/>
            <person name="Turon-Sans J."/>
            <person name="Fuentes Prior P."/>
            <person name="Bernal Noguera S."/>
            <person name="Cortes-Vicente E."/>
            <person name="Lopez-Perez M.A."/>
            <person name="Gallardo E."/>
            <person name="Rojas-Garcia R."/>
        </authorList>
    </citation>
    <scope>ERRATUM OF PUBMED:33320396</scope>
</reference>
<reference key="12">
    <citation type="journal article" date="2021" name="Muscle Nerve">
        <title>Dominant and recessive congenital myasthenic syndromes caused by SYT2 mutations.</title>
        <authorList>
            <person name="Maselli R.A."/>
            <person name="Wei D.T."/>
            <person name="Hodgson T.S."/>
            <person name="Sampson J.B."/>
            <person name="Vazquez J."/>
            <person name="Smith H.L."/>
            <person name="Pytel P."/>
            <person name="Ferns M."/>
        </authorList>
    </citation>
    <scope>VARIANT CMS7A PRO-365</scope>
</reference>
<proteinExistence type="evidence at protein level"/>
<evidence type="ECO:0000250" key="1"/>
<evidence type="ECO:0000250" key="2">
    <source>
        <dbReference type="UniProtKB" id="P21707"/>
    </source>
</evidence>
<evidence type="ECO:0000250" key="3">
    <source>
        <dbReference type="UniProtKB" id="P29101"/>
    </source>
</evidence>
<evidence type="ECO:0000250" key="4">
    <source>
        <dbReference type="UniProtKB" id="P46097"/>
    </source>
</evidence>
<evidence type="ECO:0000255" key="5"/>
<evidence type="ECO:0000255" key="6">
    <source>
        <dbReference type="PROSITE-ProRule" id="PRU00041"/>
    </source>
</evidence>
<evidence type="ECO:0000256" key="7">
    <source>
        <dbReference type="SAM" id="MobiDB-lite"/>
    </source>
</evidence>
<evidence type="ECO:0000269" key="8">
    <source>
    </source>
</evidence>
<evidence type="ECO:0000269" key="9">
    <source>
    </source>
</evidence>
<evidence type="ECO:0000269" key="10">
    <source>
    </source>
</evidence>
<evidence type="ECO:0000269" key="11">
    <source>
    </source>
</evidence>
<evidence type="ECO:0000269" key="12">
    <source>
    </source>
</evidence>
<evidence type="ECO:0000269" key="13">
    <source>
    </source>
</evidence>
<evidence type="ECO:0000269" key="14">
    <source>
    </source>
</evidence>
<evidence type="ECO:0000269" key="15">
    <source>
    </source>
</evidence>
<evidence type="ECO:0000269" key="16">
    <source>
    </source>
</evidence>
<evidence type="ECO:0000305" key="17"/>
<evidence type="ECO:0000312" key="18">
    <source>
        <dbReference type="HGNC" id="HGNC:11510"/>
    </source>
</evidence>
<evidence type="ECO:0007829" key="19">
    <source>
        <dbReference type="PDB" id="6G5G"/>
    </source>
</evidence>
<gene>
    <name evidence="18" type="primary">SYT2</name>
</gene>
<keyword id="KW-0002">3D-structure</keyword>
<keyword id="KW-0106">Calcium</keyword>
<keyword id="KW-1004">Congenital myasthenic syndrome</keyword>
<keyword id="KW-0963">Cytoplasm</keyword>
<keyword id="KW-0968">Cytoplasmic vesicle</keyword>
<keyword id="KW-0221">Differentiation</keyword>
<keyword id="KW-0225">Disease variant</keyword>
<keyword id="KW-0325">Glycoprotein</keyword>
<keyword id="KW-0472">Membrane</keyword>
<keyword id="KW-0479">Metal-binding</keyword>
<keyword id="KW-0597">Phosphoprotein</keyword>
<keyword id="KW-1267">Proteomics identification</keyword>
<keyword id="KW-1185">Reference proteome</keyword>
<keyword id="KW-0677">Repeat</keyword>
<keyword id="KW-0770">Synapse</keyword>
<keyword id="KW-0812">Transmembrane</keyword>
<keyword id="KW-1133">Transmembrane helix</keyword>
<sequence length="419" mass="46872">MRNIFKRNQEPIVAPATTTATMPIGPVDNSTESGGAGESQEDMFAKLKEKLFNEINKIPLPPWALIAIAVVAGLLLLTCCFCICKKCCCKKKKNKKEKGKGMKNAMNMKDMKGGQDDDDAETGLTEGEGEGEEEKEPENLGKLQFSLDYDFQANQLTVGVLQAAELPALDMGGTSDPYVKVFLLPDKKKKYETKVHRKTLNPAFNETFTFKVPYQELGGKTLVMAIYDFDRFSKHDIIGEVKVPMNTVDLGQPIEEWRDLQGGEKEEPEKLGDICTSLRYVPTAGKLTVCILEAKNLKKMDVGGLSDPYVKIHLMQNGKRLKKKKTTVKKKTLNPYFNESFSFEIPFEQIQKVQVVVTVLDYDKLGKNEAIGKIFVGSNATGTELRHWSDMLANPRRPIAQWHSLKPEEEVDALLGKNK</sequence>